<evidence type="ECO:0000255" key="1">
    <source>
        <dbReference type="HAMAP-Rule" id="MF_00087"/>
    </source>
</evidence>
<evidence type="ECO:0000256" key="2">
    <source>
        <dbReference type="SAM" id="MobiDB-lite"/>
    </source>
</evidence>
<proteinExistence type="inferred from homology"/>
<sequence length="473" mass="50720">MSLLVVGVSHRGTPLSLLERAVLDSDQATKLLDDLVGSPVVREGMVLSTCNRVEIYACVEKFHPALTLISELLSRHGNVNFDEIAGHVHVHYDDRAVQHLFAVAAGLDSMLIGEHQVVGQVRDAFRLAQERGYAGRDLHAIVQDALHAARRVRAETRIDSAGQTLVDVGLQILSERLGPLAGRRALVIGAGAMASVAVAALTRVGITGLTVASRTLRRATALAQRYNGQAAALEKLADLLAETDVVVSCTGSVHPVVDAATLTKAVAGRTNPLGILDIALPHDVDPDVDRLPNVIRVDLETLRPVLENTASSADVRHARHILDEEFDAHVARRAAVGVVPTVVALRDKAARVVAAELRRLEKRLPELDPRQFEEIRTTVHRVVDKLLHAPTVRVQELAGLAGPDSYSEALRTLFDLDPAQPVAISAPQPSTDSPARAAYQPTDEAATDAEPRRDDAEPPSAAAAQDAGRESRP</sequence>
<name>HEM1_ACIC1</name>
<reference key="1">
    <citation type="journal article" date="2009" name="Genome Res.">
        <title>Complete genome of the cellulolytic thermophile Acidothermus cellulolyticus 11B provides insights into its ecophysiological and evolutionary adaptations.</title>
        <authorList>
            <person name="Barabote R.D."/>
            <person name="Xie G."/>
            <person name="Leu D.H."/>
            <person name="Normand P."/>
            <person name="Necsulea A."/>
            <person name="Daubin V."/>
            <person name="Medigue C."/>
            <person name="Adney W.S."/>
            <person name="Xu X.C."/>
            <person name="Lapidus A."/>
            <person name="Parales R.E."/>
            <person name="Detter C."/>
            <person name="Pujic P."/>
            <person name="Bruce D."/>
            <person name="Lavire C."/>
            <person name="Challacombe J.F."/>
            <person name="Brettin T.S."/>
            <person name="Berry A.M."/>
        </authorList>
    </citation>
    <scope>NUCLEOTIDE SEQUENCE [LARGE SCALE GENOMIC DNA]</scope>
    <source>
        <strain>ATCC 43068 / DSM 8971 / 11B</strain>
    </source>
</reference>
<dbReference type="EC" id="1.2.1.70" evidence="1"/>
<dbReference type="EMBL" id="CP000481">
    <property type="protein sequence ID" value="ABK52012.1"/>
    <property type="molecule type" value="Genomic_DNA"/>
</dbReference>
<dbReference type="RefSeq" id="WP_011719076.1">
    <property type="nucleotide sequence ID" value="NC_008578.1"/>
</dbReference>
<dbReference type="SMR" id="A0LRF2"/>
<dbReference type="FunCoup" id="A0LRF2">
    <property type="interactions" value="128"/>
</dbReference>
<dbReference type="STRING" id="351607.Acel_0238"/>
<dbReference type="KEGG" id="ace:Acel_0238"/>
<dbReference type="eggNOG" id="COG0373">
    <property type="taxonomic scope" value="Bacteria"/>
</dbReference>
<dbReference type="HOGENOM" id="CLU_035113_4_0_11"/>
<dbReference type="InParanoid" id="A0LRF2"/>
<dbReference type="OrthoDB" id="110209at2"/>
<dbReference type="UniPathway" id="UPA00251">
    <property type="reaction ID" value="UER00316"/>
</dbReference>
<dbReference type="Proteomes" id="UP000008221">
    <property type="component" value="Chromosome"/>
</dbReference>
<dbReference type="GO" id="GO:0008883">
    <property type="term" value="F:glutamyl-tRNA reductase activity"/>
    <property type="evidence" value="ECO:0007669"/>
    <property type="project" value="UniProtKB-UniRule"/>
</dbReference>
<dbReference type="GO" id="GO:0050661">
    <property type="term" value="F:NADP binding"/>
    <property type="evidence" value="ECO:0007669"/>
    <property type="project" value="InterPro"/>
</dbReference>
<dbReference type="GO" id="GO:0019353">
    <property type="term" value="P:protoporphyrinogen IX biosynthetic process from glutamate"/>
    <property type="evidence" value="ECO:0007669"/>
    <property type="project" value="TreeGrafter"/>
</dbReference>
<dbReference type="CDD" id="cd05213">
    <property type="entry name" value="NAD_bind_Glutamyl_tRNA_reduct"/>
    <property type="match status" value="1"/>
</dbReference>
<dbReference type="FunFam" id="3.30.460.30:FF:000001">
    <property type="entry name" value="Glutamyl-tRNA reductase"/>
    <property type="match status" value="1"/>
</dbReference>
<dbReference type="Gene3D" id="3.30.460.30">
    <property type="entry name" value="Glutamyl-tRNA reductase, N-terminal domain"/>
    <property type="match status" value="1"/>
</dbReference>
<dbReference type="Gene3D" id="3.40.50.720">
    <property type="entry name" value="NAD(P)-binding Rossmann-like Domain"/>
    <property type="match status" value="1"/>
</dbReference>
<dbReference type="HAMAP" id="MF_00087">
    <property type="entry name" value="Glu_tRNA_reductase"/>
    <property type="match status" value="1"/>
</dbReference>
<dbReference type="InterPro" id="IPR000343">
    <property type="entry name" value="4pyrrol_synth_GluRdtase"/>
</dbReference>
<dbReference type="InterPro" id="IPR015896">
    <property type="entry name" value="4pyrrol_synth_GluRdtase_dimer"/>
</dbReference>
<dbReference type="InterPro" id="IPR015895">
    <property type="entry name" value="4pyrrol_synth_GluRdtase_N"/>
</dbReference>
<dbReference type="InterPro" id="IPR018214">
    <property type="entry name" value="GluRdtase_CS"/>
</dbReference>
<dbReference type="InterPro" id="IPR036453">
    <property type="entry name" value="GluRdtase_dimer_dom_sf"/>
</dbReference>
<dbReference type="InterPro" id="IPR036343">
    <property type="entry name" value="GluRdtase_N_sf"/>
</dbReference>
<dbReference type="InterPro" id="IPR036291">
    <property type="entry name" value="NAD(P)-bd_dom_sf"/>
</dbReference>
<dbReference type="InterPro" id="IPR006151">
    <property type="entry name" value="Shikm_DH/Glu-tRNA_Rdtase"/>
</dbReference>
<dbReference type="NCBIfam" id="TIGR01035">
    <property type="entry name" value="hemA"/>
    <property type="match status" value="1"/>
</dbReference>
<dbReference type="NCBIfam" id="NF000744">
    <property type="entry name" value="PRK00045.1-3"/>
    <property type="match status" value="1"/>
</dbReference>
<dbReference type="PANTHER" id="PTHR43013">
    <property type="entry name" value="GLUTAMYL-TRNA REDUCTASE"/>
    <property type="match status" value="1"/>
</dbReference>
<dbReference type="PANTHER" id="PTHR43013:SF1">
    <property type="entry name" value="GLUTAMYL-TRNA REDUCTASE"/>
    <property type="match status" value="1"/>
</dbReference>
<dbReference type="Pfam" id="PF00745">
    <property type="entry name" value="GlutR_dimer"/>
    <property type="match status" value="1"/>
</dbReference>
<dbReference type="Pfam" id="PF05201">
    <property type="entry name" value="GlutR_N"/>
    <property type="match status" value="1"/>
</dbReference>
<dbReference type="Pfam" id="PF01488">
    <property type="entry name" value="Shikimate_DH"/>
    <property type="match status" value="1"/>
</dbReference>
<dbReference type="PIRSF" id="PIRSF000445">
    <property type="entry name" value="4pyrrol_synth_GluRdtase"/>
    <property type="match status" value="1"/>
</dbReference>
<dbReference type="SUPFAM" id="SSF69742">
    <property type="entry name" value="Glutamyl tRNA-reductase catalytic, N-terminal domain"/>
    <property type="match status" value="1"/>
</dbReference>
<dbReference type="SUPFAM" id="SSF69075">
    <property type="entry name" value="Glutamyl tRNA-reductase dimerization domain"/>
    <property type="match status" value="1"/>
</dbReference>
<dbReference type="SUPFAM" id="SSF51735">
    <property type="entry name" value="NAD(P)-binding Rossmann-fold domains"/>
    <property type="match status" value="1"/>
</dbReference>
<dbReference type="PROSITE" id="PS00747">
    <property type="entry name" value="GLUTR"/>
    <property type="match status" value="1"/>
</dbReference>
<keyword id="KW-0521">NADP</keyword>
<keyword id="KW-0560">Oxidoreductase</keyword>
<keyword id="KW-0627">Porphyrin biosynthesis</keyword>
<keyword id="KW-1185">Reference proteome</keyword>
<feature type="chain" id="PRO_0000335000" description="Glutamyl-tRNA reductase">
    <location>
        <begin position="1"/>
        <end position="473"/>
    </location>
</feature>
<feature type="region of interest" description="Disordered" evidence="2">
    <location>
        <begin position="422"/>
        <end position="473"/>
    </location>
</feature>
<feature type="active site" description="Nucleophile" evidence="1">
    <location>
        <position position="50"/>
    </location>
</feature>
<feature type="binding site" evidence="1">
    <location>
        <begin position="49"/>
        <end position="52"/>
    </location>
    <ligand>
        <name>substrate</name>
    </ligand>
</feature>
<feature type="binding site" evidence="1">
    <location>
        <position position="109"/>
    </location>
    <ligand>
        <name>substrate</name>
    </ligand>
</feature>
<feature type="binding site" evidence="1">
    <location>
        <begin position="114"/>
        <end position="116"/>
    </location>
    <ligand>
        <name>substrate</name>
    </ligand>
</feature>
<feature type="binding site" evidence="1">
    <location>
        <position position="120"/>
    </location>
    <ligand>
        <name>substrate</name>
    </ligand>
</feature>
<feature type="binding site" evidence="1">
    <location>
        <begin position="189"/>
        <end position="194"/>
    </location>
    <ligand>
        <name>NADP(+)</name>
        <dbReference type="ChEBI" id="CHEBI:58349"/>
    </ligand>
</feature>
<feature type="site" description="Important for activity" evidence="1">
    <location>
        <position position="99"/>
    </location>
</feature>
<comment type="function">
    <text evidence="1">Catalyzes the NADPH-dependent reduction of glutamyl-tRNA(Glu) to glutamate 1-semialdehyde (GSA).</text>
</comment>
<comment type="catalytic activity">
    <reaction evidence="1">
        <text>(S)-4-amino-5-oxopentanoate + tRNA(Glu) + NADP(+) = L-glutamyl-tRNA(Glu) + NADPH + H(+)</text>
        <dbReference type="Rhea" id="RHEA:12344"/>
        <dbReference type="Rhea" id="RHEA-COMP:9663"/>
        <dbReference type="Rhea" id="RHEA-COMP:9680"/>
        <dbReference type="ChEBI" id="CHEBI:15378"/>
        <dbReference type="ChEBI" id="CHEBI:57501"/>
        <dbReference type="ChEBI" id="CHEBI:57783"/>
        <dbReference type="ChEBI" id="CHEBI:58349"/>
        <dbReference type="ChEBI" id="CHEBI:78442"/>
        <dbReference type="ChEBI" id="CHEBI:78520"/>
        <dbReference type="EC" id="1.2.1.70"/>
    </reaction>
</comment>
<comment type="pathway">
    <text evidence="1">Porphyrin-containing compound metabolism; protoporphyrin-IX biosynthesis; 5-aminolevulinate from L-glutamyl-tRNA(Glu): step 1/2.</text>
</comment>
<comment type="subunit">
    <text evidence="1">Homodimer.</text>
</comment>
<comment type="domain">
    <text evidence="1">Possesses an unusual extended V-shaped dimeric structure with each monomer consisting of three distinct domains arranged along a curved 'spinal' alpha-helix. The N-terminal catalytic domain specifically recognizes the glutamate moiety of the substrate. The second domain is the NADPH-binding domain, and the third C-terminal domain is responsible for dimerization.</text>
</comment>
<comment type="miscellaneous">
    <text evidence="1">During catalysis, the active site Cys acts as a nucleophile attacking the alpha-carbonyl group of tRNA-bound glutamate with the formation of a thioester intermediate between enzyme and glutamate, and the concomitant release of tRNA(Glu). The thioester intermediate is finally reduced by direct hydride transfer from NADPH, to form the product GSA.</text>
</comment>
<comment type="similarity">
    <text evidence="1">Belongs to the glutamyl-tRNA reductase family.</text>
</comment>
<organism>
    <name type="scientific">Acidothermus cellulolyticus (strain ATCC 43068 / DSM 8971 / 11B)</name>
    <dbReference type="NCBI Taxonomy" id="351607"/>
    <lineage>
        <taxon>Bacteria</taxon>
        <taxon>Bacillati</taxon>
        <taxon>Actinomycetota</taxon>
        <taxon>Actinomycetes</taxon>
        <taxon>Acidothermales</taxon>
        <taxon>Acidothermaceae</taxon>
        <taxon>Acidothermus</taxon>
    </lineage>
</organism>
<protein>
    <recommendedName>
        <fullName evidence="1">Glutamyl-tRNA reductase</fullName>
        <shortName evidence="1">GluTR</shortName>
        <ecNumber evidence="1">1.2.1.70</ecNumber>
    </recommendedName>
</protein>
<gene>
    <name evidence="1" type="primary">hemA</name>
    <name type="ordered locus">Acel_0238</name>
</gene>
<accession>A0LRF2</accession>